<proteinExistence type="inferred from homology"/>
<gene>
    <name type="primary">purB</name>
    <name type="ordered locus">AF_2242</name>
</gene>
<sequence>MIVHPIDYRYGTPEMKRIWSEDSKIKRMVRVEMALLRALAKKGYLSEEEAKEAKKKAYSVTPERVKEIEAEIKHDIMALVKAITEATGCRWVHFGATSNDIIDTATALQLRDSLKILEVKIKRLAKVLADKALEYKDVVCLGRTHGQAALPTTYGFRFALWAAEVARHYIRLQQMKDRLLVGQMSGAVGTQAAFGKDGFEIEEEVMRLLNLKPALISSQIIPRDSYCEYLEFLANLAATLEKIALNFRLLQRAEVGELMEKFEAKQVGSSTMPHKRNPIDCENVCGLARVVRGFVEPQHQSAILWEERDLTNSSAERITLVESTVLADHILTKMIKVVSSVSLNLENIRRNLEMQRGLNLSEAVMIEMTKRGVGRQEAHEILRQAAMRAYENNSSLLDELLKDERVMKYFKEDELREILKPENYLGTARERVERVVRWVNEVLK</sequence>
<accession>O28041</accession>
<protein>
    <recommendedName>
        <fullName>Adenylosuccinate lyase</fullName>
        <shortName>ASL</shortName>
        <ecNumber evidence="2">4.3.2.2</ecNumber>
    </recommendedName>
    <alternativeName>
        <fullName>Adenylosuccinase</fullName>
        <shortName>ASase</shortName>
    </alternativeName>
</protein>
<feature type="chain" id="PRO_0000137887" description="Adenylosuccinate lyase">
    <location>
        <begin position="1"/>
        <end position="444"/>
    </location>
</feature>
<feature type="active site" description="Proton donor/acceptor" evidence="2">
    <location>
        <position position="145"/>
    </location>
</feature>
<feature type="active site" description="Proton donor/acceptor" evidence="2">
    <location>
        <position position="269"/>
    </location>
</feature>
<feature type="binding site" evidence="2">
    <location>
        <begin position="9"/>
        <end position="10"/>
    </location>
    <ligand>
        <name>N(6)-(1,2-dicarboxyethyl)-AMP</name>
        <dbReference type="ChEBI" id="CHEBI:57567"/>
    </ligand>
</feature>
<feature type="binding site" evidence="2">
    <location>
        <begin position="73"/>
        <end position="75"/>
    </location>
    <ligand>
        <name>N(6)-(1,2-dicarboxyethyl)-AMP</name>
        <dbReference type="ChEBI" id="CHEBI:57567"/>
    </ligand>
</feature>
<feature type="binding site" evidence="2">
    <location>
        <begin position="97"/>
        <end position="98"/>
    </location>
    <ligand>
        <name>N(6)-(1,2-dicarboxyethyl)-AMP</name>
        <dbReference type="ChEBI" id="CHEBI:57567"/>
    </ligand>
</feature>
<feature type="binding site" evidence="2">
    <location>
        <position position="219"/>
    </location>
    <ligand>
        <name>N(6)-(1,2-dicarboxyethyl)-AMP</name>
        <dbReference type="ChEBI" id="CHEBI:57567"/>
    </ligand>
</feature>
<feature type="binding site" evidence="2">
    <location>
        <position position="270"/>
    </location>
    <ligand>
        <name>N(6)-(1,2-dicarboxyethyl)-AMP</name>
        <dbReference type="ChEBI" id="CHEBI:57567"/>
    </ligand>
</feature>
<feature type="binding site" evidence="2">
    <location>
        <begin position="275"/>
        <end position="277"/>
    </location>
    <ligand>
        <name>N(6)-(1,2-dicarboxyethyl)-AMP</name>
        <dbReference type="ChEBI" id="CHEBI:57567"/>
    </ligand>
</feature>
<feature type="binding site" evidence="2">
    <location>
        <position position="283"/>
    </location>
    <ligand>
        <name>N(6)-(1,2-dicarboxyethyl)-AMP</name>
        <dbReference type="ChEBI" id="CHEBI:57567"/>
    </ligand>
</feature>
<feature type="binding site" evidence="2">
    <location>
        <begin position="314"/>
        <end position="318"/>
    </location>
    <ligand>
        <name>N(6)-(1,2-dicarboxyethyl)-AMP</name>
        <dbReference type="ChEBI" id="CHEBI:57567"/>
    </ligand>
</feature>
<organism>
    <name type="scientific">Archaeoglobus fulgidus (strain ATCC 49558 / DSM 4304 / JCM 9628 / NBRC 100126 / VC-16)</name>
    <dbReference type="NCBI Taxonomy" id="224325"/>
    <lineage>
        <taxon>Archaea</taxon>
        <taxon>Methanobacteriati</taxon>
        <taxon>Methanobacteriota</taxon>
        <taxon>Archaeoglobi</taxon>
        <taxon>Archaeoglobales</taxon>
        <taxon>Archaeoglobaceae</taxon>
        <taxon>Archaeoglobus</taxon>
    </lineage>
</organism>
<comment type="function">
    <text evidence="2">Catalyzes two reactions in de novo purine nucleotide biosynthesis. Catalyzes the breakdown of 5-aminoimidazole- (N-succinylocarboxamide) ribotide (SAICAR or 2-[5-amino-1-(5-phospho-beta-D-ribosyl)imidazole-4-carboxamido]succinate) to 5-aminoimidazole-4-carboxamide ribotide (AICAR or 5-amino-1-(5-phospho-beta-D-ribosyl)imidazole-4-carboxamide) and fumarate, and of adenylosuccinate (ADS or N(6)-(1,2-dicarboxyethyl)-AMP) to adenosine monophosphate (AMP) and fumarate.</text>
</comment>
<comment type="catalytic activity">
    <reaction evidence="2">
        <text>N(6)-(1,2-dicarboxyethyl)-AMP = fumarate + AMP</text>
        <dbReference type="Rhea" id="RHEA:16853"/>
        <dbReference type="ChEBI" id="CHEBI:29806"/>
        <dbReference type="ChEBI" id="CHEBI:57567"/>
        <dbReference type="ChEBI" id="CHEBI:456215"/>
        <dbReference type="EC" id="4.3.2.2"/>
    </reaction>
    <physiologicalReaction direction="left-to-right" evidence="2">
        <dbReference type="Rhea" id="RHEA:16854"/>
    </physiologicalReaction>
</comment>
<comment type="catalytic activity">
    <reaction evidence="2">
        <text>(2S)-2-[5-amino-1-(5-phospho-beta-D-ribosyl)imidazole-4-carboxamido]succinate = 5-amino-1-(5-phospho-beta-D-ribosyl)imidazole-4-carboxamide + fumarate</text>
        <dbReference type="Rhea" id="RHEA:23920"/>
        <dbReference type="ChEBI" id="CHEBI:29806"/>
        <dbReference type="ChEBI" id="CHEBI:58443"/>
        <dbReference type="ChEBI" id="CHEBI:58475"/>
        <dbReference type="EC" id="4.3.2.2"/>
    </reaction>
    <physiologicalReaction direction="left-to-right" evidence="2">
        <dbReference type="Rhea" id="RHEA:23921"/>
    </physiologicalReaction>
</comment>
<comment type="pathway">
    <text>Purine metabolism; AMP biosynthesis via de novo pathway; AMP from IMP: step 2/2.</text>
</comment>
<comment type="pathway">
    <text>Purine metabolism; IMP biosynthesis via de novo pathway; 5-amino-1-(5-phospho-D-ribosyl)imidazole-4-carboxamide from 5-amino-1-(5-phospho-D-ribosyl)imidazole-4-carboxylate: step 2/2.</text>
</comment>
<comment type="subunit">
    <text evidence="1">Homotetramer. Residues from neighboring subunits contribute catalytic and substrate-binding residues to each active site (By similarity).</text>
</comment>
<comment type="similarity">
    <text evidence="3">Belongs to the lyase 1 family. Adenylosuccinate lyase subfamily.</text>
</comment>
<dbReference type="EC" id="4.3.2.2" evidence="2"/>
<dbReference type="EMBL" id="AE000782">
    <property type="protein sequence ID" value="AAB89013.1"/>
    <property type="molecule type" value="Genomic_DNA"/>
</dbReference>
<dbReference type="PIR" id="B69530">
    <property type="entry name" value="B69530"/>
</dbReference>
<dbReference type="RefSeq" id="WP_010879731.1">
    <property type="nucleotide sequence ID" value="NC_000917.1"/>
</dbReference>
<dbReference type="SMR" id="O28041"/>
<dbReference type="STRING" id="224325.AF_2242"/>
<dbReference type="PaxDb" id="224325-AF_2242"/>
<dbReference type="EnsemblBacteria" id="AAB89013">
    <property type="protein sequence ID" value="AAB89013"/>
    <property type="gene ID" value="AF_2242"/>
</dbReference>
<dbReference type="GeneID" id="24796004"/>
<dbReference type="KEGG" id="afu:AF_2242"/>
<dbReference type="eggNOG" id="arCOG01747">
    <property type="taxonomic scope" value="Archaea"/>
</dbReference>
<dbReference type="HOGENOM" id="CLU_030949_0_1_2"/>
<dbReference type="OrthoDB" id="7033at2157"/>
<dbReference type="PhylomeDB" id="O28041"/>
<dbReference type="UniPathway" id="UPA00074">
    <property type="reaction ID" value="UER00132"/>
</dbReference>
<dbReference type="UniPathway" id="UPA00075">
    <property type="reaction ID" value="UER00336"/>
</dbReference>
<dbReference type="Proteomes" id="UP000002199">
    <property type="component" value="Chromosome"/>
</dbReference>
<dbReference type="GO" id="GO:0005829">
    <property type="term" value="C:cytosol"/>
    <property type="evidence" value="ECO:0007669"/>
    <property type="project" value="TreeGrafter"/>
</dbReference>
<dbReference type="GO" id="GO:0070626">
    <property type="term" value="F:(S)-2-(5-amino-1-(5-phospho-D-ribosyl)imidazole-4-carboxamido) succinate lyase (fumarate-forming) activity"/>
    <property type="evidence" value="ECO:0007669"/>
    <property type="project" value="TreeGrafter"/>
</dbReference>
<dbReference type="GO" id="GO:0004018">
    <property type="term" value="F:N6-(1,2-dicarboxyethyl)AMP AMP-lyase (fumarate-forming) activity"/>
    <property type="evidence" value="ECO:0007669"/>
    <property type="project" value="InterPro"/>
</dbReference>
<dbReference type="GO" id="GO:0044208">
    <property type="term" value="P:'de novo' AMP biosynthetic process"/>
    <property type="evidence" value="ECO:0007669"/>
    <property type="project" value="UniProtKB-UniPathway"/>
</dbReference>
<dbReference type="GO" id="GO:0006189">
    <property type="term" value="P:'de novo' IMP biosynthetic process"/>
    <property type="evidence" value="ECO:0007669"/>
    <property type="project" value="UniProtKB-UniPathway"/>
</dbReference>
<dbReference type="CDD" id="cd01360">
    <property type="entry name" value="Adenylsuccinate_lyase_1"/>
    <property type="match status" value="1"/>
</dbReference>
<dbReference type="FunFam" id="1.10.40.30:FF:000007">
    <property type="entry name" value="Adenylosuccinate lyase"/>
    <property type="match status" value="1"/>
</dbReference>
<dbReference type="FunFam" id="1.20.200.10:FF:000008">
    <property type="entry name" value="Adenylosuccinate lyase"/>
    <property type="match status" value="1"/>
</dbReference>
<dbReference type="Gene3D" id="1.10.40.30">
    <property type="entry name" value="Fumarase/aspartase (C-terminal domain)"/>
    <property type="match status" value="1"/>
</dbReference>
<dbReference type="Gene3D" id="1.20.200.10">
    <property type="entry name" value="Fumarase/aspartase (Central domain)"/>
    <property type="match status" value="1"/>
</dbReference>
<dbReference type="Gene3D" id="1.10.275.10">
    <property type="entry name" value="Fumarase/aspartase (N-terminal domain)"/>
    <property type="match status" value="1"/>
</dbReference>
<dbReference type="InterPro" id="IPR019468">
    <property type="entry name" value="AdenyloSucc_lyase_C"/>
</dbReference>
<dbReference type="InterPro" id="IPR024083">
    <property type="entry name" value="Fumarase/histidase_N"/>
</dbReference>
<dbReference type="InterPro" id="IPR020557">
    <property type="entry name" value="Fumarate_lyase_CS"/>
</dbReference>
<dbReference type="InterPro" id="IPR000362">
    <property type="entry name" value="Fumarate_lyase_fam"/>
</dbReference>
<dbReference type="InterPro" id="IPR022761">
    <property type="entry name" value="Fumarate_lyase_N"/>
</dbReference>
<dbReference type="InterPro" id="IPR008948">
    <property type="entry name" value="L-Aspartase-like"/>
</dbReference>
<dbReference type="InterPro" id="IPR004769">
    <property type="entry name" value="Pur_lyase"/>
</dbReference>
<dbReference type="NCBIfam" id="TIGR00928">
    <property type="entry name" value="purB"/>
    <property type="match status" value="1"/>
</dbReference>
<dbReference type="PANTHER" id="PTHR43172">
    <property type="entry name" value="ADENYLOSUCCINATE LYASE"/>
    <property type="match status" value="1"/>
</dbReference>
<dbReference type="PANTHER" id="PTHR43172:SF1">
    <property type="entry name" value="ADENYLOSUCCINATE LYASE"/>
    <property type="match status" value="1"/>
</dbReference>
<dbReference type="Pfam" id="PF10397">
    <property type="entry name" value="ADSL_C"/>
    <property type="match status" value="1"/>
</dbReference>
<dbReference type="Pfam" id="PF00206">
    <property type="entry name" value="Lyase_1"/>
    <property type="match status" value="1"/>
</dbReference>
<dbReference type="PRINTS" id="PR00145">
    <property type="entry name" value="ARGSUCLYASE"/>
</dbReference>
<dbReference type="PRINTS" id="PR00149">
    <property type="entry name" value="FUMRATELYASE"/>
</dbReference>
<dbReference type="SMART" id="SM00998">
    <property type="entry name" value="ADSL_C"/>
    <property type="match status" value="1"/>
</dbReference>
<dbReference type="SUPFAM" id="SSF48557">
    <property type="entry name" value="L-aspartase-like"/>
    <property type="match status" value="1"/>
</dbReference>
<dbReference type="PROSITE" id="PS00163">
    <property type="entry name" value="FUMARATE_LYASES"/>
    <property type="match status" value="1"/>
</dbReference>
<evidence type="ECO:0000250" key="1"/>
<evidence type="ECO:0000250" key="2">
    <source>
        <dbReference type="UniProtKB" id="P0AB89"/>
    </source>
</evidence>
<evidence type="ECO:0000305" key="3"/>
<reference key="1">
    <citation type="journal article" date="1997" name="Nature">
        <title>The complete genome sequence of the hyperthermophilic, sulphate-reducing archaeon Archaeoglobus fulgidus.</title>
        <authorList>
            <person name="Klenk H.-P."/>
            <person name="Clayton R.A."/>
            <person name="Tomb J.-F."/>
            <person name="White O."/>
            <person name="Nelson K.E."/>
            <person name="Ketchum K.A."/>
            <person name="Dodson R.J."/>
            <person name="Gwinn M.L."/>
            <person name="Hickey E.K."/>
            <person name="Peterson J.D."/>
            <person name="Richardson D.L."/>
            <person name="Kerlavage A.R."/>
            <person name="Graham D.E."/>
            <person name="Kyrpides N.C."/>
            <person name="Fleischmann R.D."/>
            <person name="Quackenbush J."/>
            <person name="Lee N.H."/>
            <person name="Sutton G.G."/>
            <person name="Gill S.R."/>
            <person name="Kirkness E.F."/>
            <person name="Dougherty B.A."/>
            <person name="McKenney K."/>
            <person name="Adams M.D."/>
            <person name="Loftus B.J."/>
            <person name="Peterson S.N."/>
            <person name="Reich C.I."/>
            <person name="McNeil L.K."/>
            <person name="Badger J.H."/>
            <person name="Glodek A."/>
            <person name="Zhou L."/>
            <person name="Overbeek R."/>
            <person name="Gocayne J.D."/>
            <person name="Weidman J.F."/>
            <person name="McDonald L.A."/>
            <person name="Utterback T.R."/>
            <person name="Cotton M.D."/>
            <person name="Spriggs T."/>
            <person name="Artiach P."/>
            <person name="Kaine B.P."/>
            <person name="Sykes S.M."/>
            <person name="Sadow P.W."/>
            <person name="D'Andrea K.P."/>
            <person name="Bowman C."/>
            <person name="Fujii C."/>
            <person name="Garland S.A."/>
            <person name="Mason T.M."/>
            <person name="Olsen G.J."/>
            <person name="Fraser C.M."/>
            <person name="Smith H.O."/>
            <person name="Woese C.R."/>
            <person name="Venter J.C."/>
        </authorList>
    </citation>
    <scope>NUCLEOTIDE SEQUENCE [LARGE SCALE GENOMIC DNA]</scope>
    <source>
        <strain>ATCC 49558 / DSM 4304 / JCM 9628 / NBRC 100126 / VC-16</strain>
    </source>
</reference>
<keyword id="KW-0456">Lyase</keyword>
<keyword id="KW-0658">Purine biosynthesis</keyword>
<keyword id="KW-1185">Reference proteome</keyword>
<name>PUR8_ARCFU</name>